<feature type="signal peptide" evidence="2">
    <location>
        <begin position="1"/>
        <end position="21"/>
    </location>
</feature>
<feature type="chain" id="PRO_5002635676" description="Cystatin-like cysteine protease inhibitor EPIC2B">
    <location>
        <begin position="22"/>
        <end position="125"/>
    </location>
</feature>
<feature type="short sequence motif" description="Secondary area of contact" evidence="1">
    <location>
        <begin position="68"/>
        <end position="72"/>
    </location>
</feature>
<feature type="site" description="Reactive site" evidence="1">
    <location>
        <position position="25"/>
    </location>
</feature>
<feature type="glycosylation site" description="N-linked (GlcNAc...) asparagine" evidence="3">
    <location>
        <position position="45"/>
    </location>
</feature>
<reference key="1">
    <citation type="journal article" date="2007" name="Plant Physiol.">
        <title>A Phytophthora infestans cystatin-like protein targets a novel tomato papain-like apoplastic protease.</title>
        <authorList>
            <person name="Tian M."/>
            <person name="Win J."/>
            <person name="Song J."/>
            <person name="van der Hoorn R."/>
            <person name="van der Knaap E."/>
            <person name="Kamoun S."/>
        </authorList>
    </citation>
    <scope>NUCLEOTIDE SEQUENCE [MRNA]</scope>
    <scope>INDUCTION</scope>
    <scope>FUNCTION</scope>
    <scope>SUBCELLULAR LOCATION</scope>
    <scope>INTERACTION WITH HOST PIP1</scope>
    <source>
        <strain>90128</strain>
    </source>
</reference>
<reference key="2">
    <citation type="journal article" date="2009" name="Proc. Natl. Acad. Sci. U.S.A.">
        <title>Apoplastic effectors secreted by two unrelated eukaryotic plant pathogens target the tomato defense protease Rcr3.</title>
        <authorList>
            <person name="Song J."/>
            <person name="Win J."/>
            <person name="Tian M."/>
            <person name="Schornack S."/>
            <person name="Kaschani F."/>
            <person name="Ilyas M."/>
            <person name="van der Hoorn R.A."/>
            <person name="Kamoun S."/>
        </authorList>
    </citation>
    <scope>FUNCTION</scope>
    <scope>SUBCELLULAR LOCATION</scope>
    <scope>INTERACTION WITH HOST RCR3</scope>
</reference>
<reference key="3">
    <citation type="journal article" date="2010" name="Plant Physiol.">
        <title>An effector-targeted protease contributes to defense against Phytophthora infestans and is under diversifying selection in natural hosts.</title>
        <authorList>
            <person name="Kaschani F."/>
            <person name="Shabab M."/>
            <person name="Bozkurt T."/>
            <person name="Shindo T."/>
            <person name="Schornack S."/>
            <person name="Gu C."/>
            <person name="Ilyas M."/>
            <person name="Win J."/>
            <person name="Kamoun S."/>
            <person name="van der Hoorn R.A."/>
        </authorList>
    </citation>
    <scope>FUNCTION</scope>
    <scope>SUBCELLULAR LOCATION</scope>
    <scope>INTERACTION WITH HOST C14</scope>
</reference>
<sequence>MSFLRPTLALLAVTALVTTSGQLNGYSKKEVTPEDTELLQKAQSNVSAYNSDVTSRICYLKVDSLETQVVSGENYKFHVSGCSVNSDKELGGCANQNCESSKYDIVIYSQSWTNTLKVTSITPAN</sequence>
<organism>
    <name type="scientific">Phytophthora infestans</name>
    <name type="common">Potato late blight agent</name>
    <name type="synonym">Botrytis infestans</name>
    <dbReference type="NCBI Taxonomy" id="4787"/>
    <lineage>
        <taxon>Eukaryota</taxon>
        <taxon>Sar</taxon>
        <taxon>Stramenopiles</taxon>
        <taxon>Oomycota</taxon>
        <taxon>Peronosporales</taxon>
        <taxon>Peronosporaceae</taxon>
        <taxon>Phytophthora</taxon>
    </lineage>
</organism>
<name>EPI2B_PHYIN</name>
<dbReference type="EMBL" id="AY935252">
    <property type="protein sequence ID" value="AAY21183.1"/>
    <property type="molecule type" value="mRNA"/>
</dbReference>
<dbReference type="SMR" id="A1L017"/>
<dbReference type="DIP" id="DIP-48695N"/>
<dbReference type="IntAct" id="A1L017">
    <property type="interactions" value="1"/>
</dbReference>
<dbReference type="MEROPS" id="I25.048"/>
<dbReference type="GlyCosmos" id="A1L017">
    <property type="glycosylation" value="1 site, No reported glycans"/>
</dbReference>
<dbReference type="VEuPathDB" id="FungiDB:PITG_09173"/>
<dbReference type="GO" id="GO:0005576">
    <property type="term" value="C:extracellular region"/>
    <property type="evidence" value="ECO:0007669"/>
    <property type="project" value="UniProtKB-SubCell"/>
</dbReference>
<dbReference type="GO" id="GO:0004869">
    <property type="term" value="F:cysteine-type endopeptidase inhibitor activity"/>
    <property type="evidence" value="ECO:0007669"/>
    <property type="project" value="UniProtKB-KW"/>
</dbReference>
<dbReference type="CDD" id="cd00042">
    <property type="entry name" value="CY"/>
    <property type="match status" value="1"/>
</dbReference>
<dbReference type="Gene3D" id="3.10.450.10">
    <property type="match status" value="1"/>
</dbReference>
<dbReference type="InterPro" id="IPR000010">
    <property type="entry name" value="Cystatin_dom"/>
</dbReference>
<dbReference type="InterPro" id="IPR046350">
    <property type="entry name" value="Cystatin_sf"/>
</dbReference>
<dbReference type="SUPFAM" id="SSF54403">
    <property type="entry name" value="Cystatin/monellin"/>
    <property type="match status" value="1"/>
</dbReference>
<dbReference type="PROSITE" id="PS00287">
    <property type="entry name" value="CYSTATIN"/>
    <property type="match status" value="1"/>
</dbReference>
<proteinExistence type="evidence at protein level"/>
<protein>
    <recommendedName>
        <fullName evidence="7">Cystatin-like cysteine protease inhibitor EPIC2B</fullName>
    </recommendedName>
    <alternativeName>
        <fullName evidence="7">Extracellular protease inhibitor with cystatin-like domain protein 2B</fullName>
    </alternativeName>
    <alternativeName>
        <fullName evidence="7">Secreted effector EPIC2B</fullName>
    </alternativeName>
</protein>
<keyword id="KW-0325">Glycoprotein</keyword>
<keyword id="KW-0646">Protease inhibitor</keyword>
<keyword id="KW-0964">Secreted</keyword>
<keyword id="KW-0732">Signal</keyword>
<keyword id="KW-0789">Thiol protease inhibitor</keyword>
<keyword id="KW-0843">Virulence</keyword>
<accession>A1L017</accession>
<evidence type="ECO:0000250" key="1">
    <source>
        <dbReference type="UniProtKB" id="P01040"/>
    </source>
</evidence>
<evidence type="ECO:0000255" key="2"/>
<evidence type="ECO:0000255" key="3">
    <source>
        <dbReference type="PROSITE-ProRule" id="PRU00498"/>
    </source>
</evidence>
<evidence type="ECO:0000269" key="4">
    <source>
    </source>
</evidence>
<evidence type="ECO:0000269" key="5">
    <source>
    </source>
</evidence>
<evidence type="ECO:0000269" key="6">
    <source>
    </source>
</evidence>
<evidence type="ECO:0000303" key="7">
    <source>
    </source>
</evidence>
<evidence type="ECO:0000305" key="8"/>
<gene>
    <name evidence="7" type="primary">EPIC2B</name>
</gene>
<comment type="function">
    <text evidence="4 5 6">Secreted effector that interacts with and inhibits the pathogenesis-related papain-like cysteine proteases C14, PIP1 and RCR3 of host plants (PubMed:17085509, PubMed:19171904, PubMed:20940351). Inhibition of host proteases by a pathogen extracellular protease inhibitor forms a specific type of defense-counterdefense mechanism between plants and microbial pathogens (PubMed:17085509, PubMed:19171904, PubMed:20940351).</text>
</comment>
<comment type="subunit">
    <text evidence="4 5 6">Interacts with the host papain-like cysteine protease PIP1 (PubMed:17085509). Interacts with the host papain-like cysteine protease RCR3 (PubMed:19171904). Interacts with the host papain-like cysteine protease C14 (PubMed:20940351).</text>
</comment>
<comment type="subcellular location">
    <subcellularLocation>
        <location evidence="4 5 6">Secreted</location>
    </subcellularLocation>
    <text evidence="4 5 6">Localizes to host apoplast where it targets defense proteases for inhibition.</text>
</comment>
<comment type="induction">
    <text evidence="4">Expression is up-regulated during infection of host tomato.</text>
</comment>
<comment type="similarity">
    <text evidence="8">Belongs to the cystatin family.</text>
</comment>